<feature type="chain" id="PRO_0000141674" description="Cobalt-precorrin-5B C(1)-methyltransferase">
    <location>
        <begin position="1"/>
        <end position="378"/>
    </location>
</feature>
<accession>Q7N2S8</accession>
<name>CBID_PHOLL</name>
<comment type="function">
    <text evidence="1">Catalyzes the methylation of C-1 in cobalt-precorrin-5B to form cobalt-precorrin-6A.</text>
</comment>
<comment type="catalytic activity">
    <reaction evidence="1">
        <text>Co-precorrin-5B + S-adenosyl-L-methionine = Co-precorrin-6A + S-adenosyl-L-homocysteine</text>
        <dbReference type="Rhea" id="RHEA:26285"/>
        <dbReference type="ChEBI" id="CHEBI:57856"/>
        <dbReference type="ChEBI" id="CHEBI:59789"/>
        <dbReference type="ChEBI" id="CHEBI:60063"/>
        <dbReference type="ChEBI" id="CHEBI:60064"/>
        <dbReference type="EC" id="2.1.1.195"/>
    </reaction>
</comment>
<comment type="pathway">
    <text evidence="1">Cofactor biosynthesis; adenosylcobalamin biosynthesis; cob(II)yrinate a,c-diamide from sirohydrochlorin (anaerobic route): step 6/10.</text>
</comment>
<comment type="similarity">
    <text evidence="1">Belongs to the CbiD family.</text>
</comment>
<gene>
    <name evidence="1" type="primary">cbiD</name>
    <name type="ordered locus">plu2996</name>
</gene>
<keyword id="KW-0169">Cobalamin biosynthesis</keyword>
<keyword id="KW-0489">Methyltransferase</keyword>
<keyword id="KW-1185">Reference proteome</keyword>
<keyword id="KW-0949">S-adenosyl-L-methionine</keyword>
<keyword id="KW-0808">Transferase</keyword>
<organism>
    <name type="scientific">Photorhabdus laumondii subsp. laumondii (strain DSM 15139 / CIP 105565 / TT01)</name>
    <name type="common">Photorhabdus luminescens subsp. laumondii</name>
    <dbReference type="NCBI Taxonomy" id="243265"/>
    <lineage>
        <taxon>Bacteria</taxon>
        <taxon>Pseudomonadati</taxon>
        <taxon>Pseudomonadota</taxon>
        <taxon>Gammaproteobacteria</taxon>
        <taxon>Enterobacterales</taxon>
        <taxon>Morganellaceae</taxon>
        <taxon>Photorhabdus</taxon>
    </lineage>
</organism>
<protein>
    <recommendedName>
        <fullName evidence="1">Cobalt-precorrin-5B C(1)-methyltransferase</fullName>
        <ecNumber evidence="1">2.1.1.195</ecNumber>
    </recommendedName>
    <alternativeName>
        <fullName evidence="1">Cobalt-precorrin-6A synthase</fullName>
    </alternativeName>
</protein>
<proteinExistence type="inferred from homology"/>
<sequence length="378" mass="41071">MSDTMQLDSIWHNGKQYRKGYTTGSCATAAAKVAALMVLRQQVIDHVSIVTPSGVTLRLNVEQPLIEGQQATAAIRKDGGDDVDATHGMLIFARVTLCDHGEIHLRGGEGVGTVTRKGVGLPVGSSAINRTPRQTIEAAVREAIGPLRGAEVEIFAPEGEERAKKTYNGRLGILGGISIIGTTGIVTPMSEESWKRSLAIELEMKRSAGAEKVILVPGNHGERFVREQLGLDGQLVVTMSNFVGYMLQEAVRLGFRHIMLVGHPGKLVKVAAGIFHTHSHIADGRMETLIAYLALMGASQELLLEVSHCDTTEAAMELIAEHGLQAVYDRIAERICERMSEMLRFAVNPPRCDAIMFSFDNQILGTSRPLNDILEAMR</sequence>
<evidence type="ECO:0000255" key="1">
    <source>
        <dbReference type="HAMAP-Rule" id="MF_00787"/>
    </source>
</evidence>
<dbReference type="EC" id="2.1.1.195" evidence="1"/>
<dbReference type="EMBL" id="BX571869">
    <property type="protein sequence ID" value="CAE15370.1"/>
    <property type="molecule type" value="Genomic_DNA"/>
</dbReference>
<dbReference type="RefSeq" id="WP_011147215.1">
    <property type="nucleotide sequence ID" value="NC_005126.1"/>
</dbReference>
<dbReference type="SMR" id="Q7N2S8"/>
<dbReference type="STRING" id="243265.plu2996"/>
<dbReference type="GeneID" id="48849255"/>
<dbReference type="KEGG" id="plu:plu2996"/>
<dbReference type="eggNOG" id="COG1903">
    <property type="taxonomic scope" value="Bacteria"/>
</dbReference>
<dbReference type="HOGENOM" id="CLU_041273_1_0_6"/>
<dbReference type="OrthoDB" id="6439987at2"/>
<dbReference type="UniPathway" id="UPA00148">
    <property type="reaction ID" value="UER00227"/>
</dbReference>
<dbReference type="Proteomes" id="UP000002514">
    <property type="component" value="Chromosome"/>
</dbReference>
<dbReference type="GO" id="GO:0043780">
    <property type="term" value="F:cobalt-precorrin-5B C1-methyltransferase activity"/>
    <property type="evidence" value="ECO:0007669"/>
    <property type="project" value="RHEA"/>
</dbReference>
<dbReference type="GO" id="GO:0019251">
    <property type="term" value="P:anaerobic cobalamin biosynthetic process"/>
    <property type="evidence" value="ECO:0007669"/>
    <property type="project" value="UniProtKB-UniRule"/>
</dbReference>
<dbReference type="GO" id="GO:0032259">
    <property type="term" value="P:methylation"/>
    <property type="evidence" value="ECO:0007669"/>
    <property type="project" value="UniProtKB-KW"/>
</dbReference>
<dbReference type="Gene3D" id="3.30.2110.10">
    <property type="entry name" value="CbiD-like"/>
    <property type="match status" value="1"/>
</dbReference>
<dbReference type="HAMAP" id="MF_00787">
    <property type="entry name" value="CbiD"/>
    <property type="match status" value="1"/>
</dbReference>
<dbReference type="InterPro" id="IPR002748">
    <property type="entry name" value="CbiD"/>
</dbReference>
<dbReference type="InterPro" id="IPR036074">
    <property type="entry name" value="CbiD_sf"/>
</dbReference>
<dbReference type="NCBIfam" id="TIGR00312">
    <property type="entry name" value="cbiD"/>
    <property type="match status" value="1"/>
</dbReference>
<dbReference type="PANTHER" id="PTHR35863">
    <property type="entry name" value="COBALT-PRECORRIN-5B C(1)-METHYLTRANSFERASE"/>
    <property type="match status" value="1"/>
</dbReference>
<dbReference type="PANTHER" id="PTHR35863:SF1">
    <property type="entry name" value="COBALT-PRECORRIN-5B C(1)-METHYLTRANSFERASE"/>
    <property type="match status" value="1"/>
</dbReference>
<dbReference type="Pfam" id="PF01888">
    <property type="entry name" value="CbiD"/>
    <property type="match status" value="1"/>
</dbReference>
<dbReference type="PIRSF" id="PIRSF026782">
    <property type="entry name" value="CbiD"/>
    <property type="match status" value="1"/>
</dbReference>
<dbReference type="SUPFAM" id="SSF111342">
    <property type="entry name" value="CbiD-like"/>
    <property type="match status" value="1"/>
</dbReference>
<reference key="1">
    <citation type="journal article" date="2003" name="Nat. Biotechnol.">
        <title>The genome sequence of the entomopathogenic bacterium Photorhabdus luminescens.</title>
        <authorList>
            <person name="Duchaud E."/>
            <person name="Rusniok C."/>
            <person name="Frangeul L."/>
            <person name="Buchrieser C."/>
            <person name="Givaudan A."/>
            <person name="Taourit S."/>
            <person name="Bocs S."/>
            <person name="Boursaux-Eude C."/>
            <person name="Chandler M."/>
            <person name="Charles J.-F."/>
            <person name="Dassa E."/>
            <person name="Derose R."/>
            <person name="Derzelle S."/>
            <person name="Freyssinet G."/>
            <person name="Gaudriault S."/>
            <person name="Medigue C."/>
            <person name="Lanois A."/>
            <person name="Powell K."/>
            <person name="Siguier P."/>
            <person name="Vincent R."/>
            <person name="Wingate V."/>
            <person name="Zouine M."/>
            <person name="Glaser P."/>
            <person name="Boemare N."/>
            <person name="Danchin A."/>
            <person name="Kunst F."/>
        </authorList>
    </citation>
    <scope>NUCLEOTIDE SEQUENCE [LARGE SCALE GENOMIC DNA]</scope>
    <source>
        <strain>DSM 15139 / CIP 105565 / TT01</strain>
    </source>
</reference>